<feature type="chain" id="PRO_0000433510" description="Sex peptide receptor">
    <location>
        <begin position="1"/>
        <end position="435"/>
    </location>
</feature>
<feature type="topological domain" description="Extracellular" evidence="7">
    <location>
        <begin position="1"/>
        <end position="93"/>
    </location>
</feature>
<feature type="transmembrane region" description="Helical; Name=1" evidence="1">
    <location>
        <begin position="94"/>
        <end position="114"/>
    </location>
</feature>
<feature type="topological domain" description="Cytoplasmic" evidence="7">
    <location>
        <begin position="115"/>
        <end position="124"/>
    </location>
</feature>
<feature type="transmembrane region" description="Helical; Name=2" evidence="1">
    <location>
        <begin position="125"/>
        <end position="145"/>
    </location>
</feature>
<feature type="topological domain" description="Extracellular" evidence="7">
    <location>
        <begin position="146"/>
        <end position="168"/>
    </location>
</feature>
<feature type="transmembrane region" description="Helical; Name=3" evidence="1">
    <location>
        <begin position="169"/>
        <end position="189"/>
    </location>
</feature>
<feature type="topological domain" description="Cytoplasmic" evidence="7">
    <location>
        <begin position="190"/>
        <end position="211"/>
    </location>
</feature>
<feature type="transmembrane region" description="Helical; Name=4" evidence="1">
    <location>
        <begin position="212"/>
        <end position="229"/>
    </location>
</feature>
<feature type="topological domain" description="Extracellular" evidence="7">
    <location>
        <begin position="230"/>
        <end position="276"/>
    </location>
</feature>
<feature type="transmembrane region" description="Helical; Name=5" evidence="1">
    <location>
        <begin position="277"/>
        <end position="297"/>
    </location>
</feature>
<feature type="topological domain" description="Cytoplasmic" evidence="7">
    <location>
        <begin position="298"/>
        <end position="327"/>
    </location>
</feature>
<feature type="transmembrane region" description="Helical; Name=6" evidence="1">
    <location>
        <begin position="328"/>
        <end position="348"/>
    </location>
</feature>
<feature type="topological domain" description="Extracellular" evidence="7">
    <location>
        <begin position="349"/>
        <end position="368"/>
    </location>
</feature>
<feature type="transmembrane region" description="Helical; Name=7" evidence="1">
    <location>
        <begin position="369"/>
        <end position="389"/>
    </location>
</feature>
<feature type="topological domain" description="Cytoplasmic" evidence="7">
    <location>
        <begin position="390"/>
        <end position="435"/>
    </location>
</feature>
<feature type="mutagenesis site" description="Decrease in response to SP. Response to MIP is less affected." evidence="4">
    <original>Q</original>
    <variation>D</variation>
    <location>
        <position position="192"/>
    </location>
</feature>
<protein>
    <recommendedName>
        <fullName evidence="10">Sex peptide receptor</fullName>
    </recommendedName>
</protein>
<comment type="function">
    <text evidence="3 4 5 6">Receptor for two functionally unrelated ligands; SP (A70A) for controlling reproductive behaviors and MIP for controlling sleep behavior (PubMed:18066048, PubMed:20308537, PubMed:20458515, PubMed:24089336, PubMed:25333796). MIP-SPR pathway functions as a sleep homeostat which perceives the need for sleep and stabilizes it by providing a slow-acting inhibitory input to the fly arousal system that involve the pigment dispersing factor (pdf) neurons (PubMed:25333796). SP-SPR is one of the multiple SP pathways that induce female post-mating behavioral responses (PMR) such as the suppression of mating receptivity and initiation of egg laying (PubMed:18066048, PubMed:24089336). The PMR switch is achieved by mediating the synaptic output of neurons such as those expressing fruitless (fru), double sex (dsx) and pickpocket (ppk) (PubMed:18066048, PubMed:24089336).</text>
</comment>
<comment type="subcellular location">
    <subcellularLocation>
        <location evidence="3">Cell membrane</location>
        <topology evidence="1">Multi-pass membrane protein</topology>
    </subcellularLocation>
</comment>
<comment type="tissue specificity">
    <text evidence="3 6">In the female, expressed in the reproductive organs; strongly expressed in the spermathecae and the lower oviduct (PubMed:18066048). No expression in the male reproductive organs (PubMed:18066048). In the central nervous system of both sexes, it is expressed in the brain and ventral nerve cord (VNC); strongly expressed in the ventral regions of the suboesophageal ganglion, the cervical connective and in many nerve roots of the brain and VNC (PubMed:18066048, PubMed:25333796). Expressed in the s-LNvs and l-LNvs pdf neurons (at protein level) (PubMed:25333796).</text>
</comment>
<comment type="developmental stage">
    <text evidence="4">Expressed throughout development. Highest expression is in the embryos.</text>
</comment>
<comment type="disruption phenotype">
    <text evidence="3 6">Fully viable without obvious effects in the nervous system or reproductive organs (PubMed:18066048). Sperm transfer and storage in the females is not affected and egg fertilization and development is normal (PubMed:18066048). However, females lay fewer eggs, mate again at high frequency and do not reject a second male after mating (PubMed:18066048). Male and female flies display reduced overall sleep duration associated with shorter sleep-bout lengths, although the number of sleep-bouts is not affected (PubMed:25333796). Sleep recovery following sleep deprivation is also impaired (PubMed:25333796).</text>
</comment>
<comment type="similarity">
    <text evidence="2">Belongs to the G-protein coupled receptor 1 family.</text>
</comment>
<gene>
    <name evidence="10" type="primary">SPR</name>
    <name evidence="10" type="ORF">CG16752</name>
</gene>
<name>SPR_DROME</name>
<sequence>MDNYTDVLYQYRLAPSASPEMEMELADPRQMVRGFHLPTNESQLEIPDYGNESLDYPNYQQMVGGPCRMEDNNISYWNLTCDSPLEYAMPLYGYCMPFLLIITIISNSLIVLVLSKKSMATPTNFVLMGMAICDMLTVIFPAPGLWYMYTFGNHYKPLHPVSMCLAYSIFNEIMPAMCHTISVWLTLALAVQRYIYVCHAPMARTWCTMPRVRRCTAYIALLAFLHQLPRFFDRTYMPLVIEWNGSPTEVCHLETSMWVHDYIGVDLYYTSYYLFRVLFVHLLPCIILVTLNILLFAAMRQAQERRKLLFRENRKKECKKLRETNCTTLMLIVVVSVFLLAEIPIAVVTAMHIVSSLIIEFLDYGLANICIMLTNFFLVFSYPINFGIYCGMSRQFRETFKEIFLGRLMAKKDSSTKYSIVNGARTCTNTNETVL</sequence>
<reference evidence="9" key="1">
    <citation type="submission" date="2008-02" db="EMBL/GenBank/DDBJ databases">
        <title>Molecular cloning and characterization of the Drosophila receptor CG16752.</title>
        <authorList>
            <person name="Nagel J.S."/>
            <person name="Hauser F."/>
            <person name="Cazzamali G."/>
            <person name="Williamson M.R."/>
            <person name="Grimmelikhuijzen C.J.P."/>
        </authorList>
    </citation>
    <scope>NUCLEOTIDE SEQUENCE [MRNA]</scope>
</reference>
<reference evidence="11" key="2">
    <citation type="journal article" date="2000" name="Science">
        <title>The genome sequence of Drosophila melanogaster.</title>
        <authorList>
            <person name="Adams M.D."/>
            <person name="Celniker S.E."/>
            <person name="Holt R.A."/>
            <person name="Evans C.A."/>
            <person name="Gocayne J.D."/>
            <person name="Amanatides P.G."/>
            <person name="Scherer S.E."/>
            <person name="Li P.W."/>
            <person name="Hoskins R.A."/>
            <person name="Galle R.F."/>
            <person name="George R.A."/>
            <person name="Lewis S.E."/>
            <person name="Richards S."/>
            <person name="Ashburner M."/>
            <person name="Henderson S.N."/>
            <person name="Sutton G.G."/>
            <person name="Wortman J.R."/>
            <person name="Yandell M.D."/>
            <person name="Zhang Q."/>
            <person name="Chen L.X."/>
            <person name="Brandon R.C."/>
            <person name="Rogers Y.-H.C."/>
            <person name="Blazej R.G."/>
            <person name="Champe M."/>
            <person name="Pfeiffer B.D."/>
            <person name="Wan K.H."/>
            <person name="Doyle C."/>
            <person name="Baxter E.G."/>
            <person name="Helt G."/>
            <person name="Nelson C.R."/>
            <person name="Miklos G.L.G."/>
            <person name="Abril J.F."/>
            <person name="Agbayani A."/>
            <person name="An H.-J."/>
            <person name="Andrews-Pfannkoch C."/>
            <person name="Baldwin D."/>
            <person name="Ballew R.M."/>
            <person name="Basu A."/>
            <person name="Baxendale J."/>
            <person name="Bayraktaroglu L."/>
            <person name="Beasley E.M."/>
            <person name="Beeson K.Y."/>
            <person name="Benos P.V."/>
            <person name="Berman B.P."/>
            <person name="Bhandari D."/>
            <person name="Bolshakov S."/>
            <person name="Borkova D."/>
            <person name="Botchan M.R."/>
            <person name="Bouck J."/>
            <person name="Brokstein P."/>
            <person name="Brottier P."/>
            <person name="Burtis K.C."/>
            <person name="Busam D.A."/>
            <person name="Butler H."/>
            <person name="Cadieu E."/>
            <person name="Center A."/>
            <person name="Chandra I."/>
            <person name="Cherry J.M."/>
            <person name="Cawley S."/>
            <person name="Dahlke C."/>
            <person name="Davenport L.B."/>
            <person name="Davies P."/>
            <person name="de Pablos B."/>
            <person name="Delcher A."/>
            <person name="Deng Z."/>
            <person name="Mays A.D."/>
            <person name="Dew I."/>
            <person name="Dietz S.M."/>
            <person name="Dodson K."/>
            <person name="Doup L.E."/>
            <person name="Downes M."/>
            <person name="Dugan-Rocha S."/>
            <person name="Dunkov B.C."/>
            <person name="Dunn P."/>
            <person name="Durbin K.J."/>
            <person name="Evangelista C.C."/>
            <person name="Ferraz C."/>
            <person name="Ferriera S."/>
            <person name="Fleischmann W."/>
            <person name="Fosler C."/>
            <person name="Gabrielian A.E."/>
            <person name="Garg N.S."/>
            <person name="Gelbart W.M."/>
            <person name="Glasser K."/>
            <person name="Glodek A."/>
            <person name="Gong F."/>
            <person name="Gorrell J.H."/>
            <person name="Gu Z."/>
            <person name="Guan P."/>
            <person name="Harris M."/>
            <person name="Harris N.L."/>
            <person name="Harvey D.A."/>
            <person name="Heiman T.J."/>
            <person name="Hernandez J.R."/>
            <person name="Houck J."/>
            <person name="Hostin D."/>
            <person name="Houston K.A."/>
            <person name="Howland T.J."/>
            <person name="Wei M.-H."/>
            <person name="Ibegwam C."/>
            <person name="Jalali M."/>
            <person name="Kalush F."/>
            <person name="Karpen G.H."/>
            <person name="Ke Z."/>
            <person name="Kennison J.A."/>
            <person name="Ketchum K.A."/>
            <person name="Kimmel B.E."/>
            <person name="Kodira C.D."/>
            <person name="Kraft C.L."/>
            <person name="Kravitz S."/>
            <person name="Kulp D."/>
            <person name="Lai Z."/>
            <person name="Lasko P."/>
            <person name="Lei Y."/>
            <person name="Levitsky A.A."/>
            <person name="Li J.H."/>
            <person name="Li Z."/>
            <person name="Liang Y."/>
            <person name="Lin X."/>
            <person name="Liu X."/>
            <person name="Mattei B."/>
            <person name="McIntosh T.C."/>
            <person name="McLeod M.P."/>
            <person name="McPherson D."/>
            <person name="Merkulov G."/>
            <person name="Milshina N.V."/>
            <person name="Mobarry C."/>
            <person name="Morris J."/>
            <person name="Moshrefi A."/>
            <person name="Mount S.M."/>
            <person name="Moy M."/>
            <person name="Murphy B."/>
            <person name="Murphy L."/>
            <person name="Muzny D.M."/>
            <person name="Nelson D.L."/>
            <person name="Nelson D.R."/>
            <person name="Nelson K.A."/>
            <person name="Nixon K."/>
            <person name="Nusskern D.R."/>
            <person name="Pacleb J.M."/>
            <person name="Palazzolo M."/>
            <person name="Pittman G.S."/>
            <person name="Pan S."/>
            <person name="Pollard J."/>
            <person name="Puri V."/>
            <person name="Reese M.G."/>
            <person name="Reinert K."/>
            <person name="Remington K."/>
            <person name="Saunders R.D.C."/>
            <person name="Scheeler F."/>
            <person name="Shen H."/>
            <person name="Shue B.C."/>
            <person name="Siden-Kiamos I."/>
            <person name="Simpson M."/>
            <person name="Skupski M.P."/>
            <person name="Smith T.J."/>
            <person name="Spier E."/>
            <person name="Spradling A.C."/>
            <person name="Stapleton M."/>
            <person name="Strong R."/>
            <person name="Sun E."/>
            <person name="Svirskas R."/>
            <person name="Tector C."/>
            <person name="Turner R."/>
            <person name="Venter E."/>
            <person name="Wang A.H."/>
            <person name="Wang X."/>
            <person name="Wang Z.-Y."/>
            <person name="Wassarman D.A."/>
            <person name="Weinstock G.M."/>
            <person name="Weissenbach J."/>
            <person name="Williams S.M."/>
            <person name="Woodage T."/>
            <person name="Worley K.C."/>
            <person name="Wu D."/>
            <person name="Yang S."/>
            <person name="Yao Q.A."/>
            <person name="Ye J."/>
            <person name="Yeh R.-F."/>
            <person name="Zaveri J.S."/>
            <person name="Zhan M."/>
            <person name="Zhang G."/>
            <person name="Zhao Q."/>
            <person name="Zheng L."/>
            <person name="Zheng X.H."/>
            <person name="Zhong F.N."/>
            <person name="Zhong W."/>
            <person name="Zhou X."/>
            <person name="Zhu S.C."/>
            <person name="Zhu X."/>
            <person name="Smith H.O."/>
            <person name="Gibbs R.A."/>
            <person name="Myers E.W."/>
            <person name="Rubin G.M."/>
            <person name="Venter J.C."/>
        </authorList>
    </citation>
    <scope>NUCLEOTIDE SEQUENCE [LARGE SCALE GENOMIC DNA]</scope>
    <source>
        <strain evidence="11">Berkeley</strain>
    </source>
</reference>
<reference evidence="11" key="3">
    <citation type="journal article" date="2002" name="Genome Biol.">
        <title>Annotation of the Drosophila melanogaster euchromatic genome: a systematic review.</title>
        <authorList>
            <person name="Misra S."/>
            <person name="Crosby M.A."/>
            <person name="Mungall C.J."/>
            <person name="Matthews B.B."/>
            <person name="Campbell K.S."/>
            <person name="Hradecky P."/>
            <person name="Huang Y."/>
            <person name="Kaminker J.S."/>
            <person name="Millburn G.H."/>
            <person name="Prochnik S.E."/>
            <person name="Smith C.D."/>
            <person name="Tupy J.L."/>
            <person name="Whitfield E.J."/>
            <person name="Bayraktaroglu L."/>
            <person name="Berman B.P."/>
            <person name="Bettencourt B.R."/>
            <person name="Celniker S.E."/>
            <person name="de Grey A.D.N.J."/>
            <person name="Drysdale R.A."/>
            <person name="Harris N.L."/>
            <person name="Richter J."/>
            <person name="Russo S."/>
            <person name="Schroeder A.J."/>
            <person name="Shu S.Q."/>
            <person name="Stapleton M."/>
            <person name="Yamada C."/>
            <person name="Ashburner M."/>
            <person name="Gelbart W.M."/>
            <person name="Rubin G.M."/>
            <person name="Lewis S.E."/>
        </authorList>
    </citation>
    <scope>GENOME REANNOTATION</scope>
    <source>
        <strain evidence="11">Berkeley</strain>
    </source>
</reference>
<reference evidence="8" key="4">
    <citation type="journal article" date="2002" name="Genome Biol.">
        <title>A Drosophila full-length cDNA resource.</title>
        <authorList>
            <person name="Stapleton M."/>
            <person name="Carlson J.W."/>
            <person name="Brokstein P."/>
            <person name="Yu C."/>
            <person name="Champe M."/>
            <person name="George R.A."/>
            <person name="Guarin H."/>
            <person name="Kronmiller B."/>
            <person name="Pacleb J.M."/>
            <person name="Park S."/>
            <person name="Wan K.H."/>
            <person name="Rubin G.M."/>
            <person name="Celniker S.E."/>
        </authorList>
    </citation>
    <scope>NUCLEOTIDE SEQUENCE [LARGE SCALE MRNA]</scope>
    <source>
        <strain>Berkeley</strain>
        <tissue>Embryo</tissue>
    </source>
</reference>
<reference evidence="7" key="5">
    <citation type="journal article" date="2008" name="Nature">
        <title>A receptor that mediates the post-mating switch in Drosophila reproductive behaviour.</title>
        <authorList>
            <person name="Yapici N."/>
            <person name="Kim Y.J."/>
            <person name="Ribeiro C."/>
            <person name="Dickson B.J."/>
        </authorList>
    </citation>
    <scope>FUNCTION</scope>
    <scope>SUBCELLULAR LOCATION</scope>
    <scope>TISSUE SPECIFICITY</scope>
    <scope>DISRUPTION PHENOTYPE</scope>
</reference>
<reference evidence="7" key="6">
    <citation type="journal article" date="2010" name="Cell. Mol. Life Sci.">
        <title>Myoinhibiting peptides are the ancestral ligands of the promiscuous Drosophila sex peptide receptor.</title>
        <authorList>
            <person name="Poels J."/>
            <person name="Van Loy T."/>
            <person name="Vandersmissen H.P."/>
            <person name="Van Hiel B."/>
            <person name="Van Soest S."/>
            <person name="Nachman R.J."/>
            <person name="Vanden Broeck J."/>
        </authorList>
    </citation>
    <scope>FUNCTION</scope>
    <scope>DEVELOPMENTAL STAGE</scope>
    <scope>MUTAGENESIS OF GLN-192</scope>
</reference>
<reference evidence="7" key="7">
    <citation type="journal article" date="2010" name="Proc. Natl. Acad. Sci. U.S.A.">
        <title>MIPs are ancestral ligands for the sex peptide receptor.</title>
        <authorList>
            <person name="Kim Y.J."/>
            <person name="Bartalska K."/>
            <person name="Audsley N."/>
            <person name="Yamanaka N."/>
            <person name="Yapici N."/>
            <person name="Lee J.Y."/>
            <person name="Kim Y.C."/>
            <person name="Markovic M."/>
            <person name="Isaac E."/>
            <person name="Tanaka Y."/>
            <person name="Dickson B.J."/>
        </authorList>
    </citation>
    <scope>FUNCTION</scope>
</reference>
<reference evidence="7" key="8">
    <citation type="journal article" date="2013" name="Proc. R. Soc. Lond., B, Biol. Sci.">
        <title>Multiple pathways mediate the sex-peptide-regulated switch in female Drosophila reproductive behaviours.</title>
        <authorList>
            <person name="Haussmann I.U."/>
            <person name="Hemani Y."/>
            <person name="Wijesekera T."/>
            <person name="Dauwalder B."/>
            <person name="Soller M."/>
        </authorList>
    </citation>
    <scope>FUNCTION</scope>
</reference>
<reference evidence="7" key="9">
    <citation type="journal article" date="2014" name="PLoS Biol.">
        <title>A homeostatic sleep-stabilizing pathway in Drosophila composed of the sex peptide receptor and its ligand, the myoinhibitory peptide.</title>
        <authorList>
            <person name="Oh Y."/>
            <person name="Yoon S.E."/>
            <person name="Zhang Q."/>
            <person name="Chae H.S."/>
            <person name="Daubnerova I."/>
            <person name="Shafer O.T."/>
            <person name="Choe J."/>
            <person name="Kim Y.J."/>
        </authorList>
    </citation>
    <scope>FUNCTION</scope>
    <scope>TISSUE SPECIFICITY</scope>
    <scope>DISRUPTION PHENOTYPE</scope>
</reference>
<organism evidence="8">
    <name type="scientific">Drosophila melanogaster</name>
    <name type="common">Fruit fly</name>
    <dbReference type="NCBI Taxonomy" id="7227"/>
    <lineage>
        <taxon>Eukaryota</taxon>
        <taxon>Metazoa</taxon>
        <taxon>Ecdysozoa</taxon>
        <taxon>Arthropoda</taxon>
        <taxon>Hexapoda</taxon>
        <taxon>Insecta</taxon>
        <taxon>Pterygota</taxon>
        <taxon>Neoptera</taxon>
        <taxon>Endopterygota</taxon>
        <taxon>Diptera</taxon>
        <taxon>Brachycera</taxon>
        <taxon>Muscomorpha</taxon>
        <taxon>Ephydroidea</taxon>
        <taxon>Drosophilidae</taxon>
        <taxon>Drosophila</taxon>
        <taxon>Sophophora</taxon>
    </lineage>
</organism>
<dbReference type="EMBL" id="EU443243">
    <property type="protein sequence ID" value="ACC68840.1"/>
    <property type="molecule type" value="mRNA"/>
</dbReference>
<dbReference type="EMBL" id="AE014298">
    <property type="protein sequence ID" value="AAF46037.2"/>
    <property type="molecule type" value="Genomic_DNA"/>
</dbReference>
<dbReference type="EMBL" id="AE014298">
    <property type="protein sequence ID" value="AHN59363.1"/>
    <property type="molecule type" value="Genomic_DNA"/>
</dbReference>
<dbReference type="EMBL" id="AE014298">
    <property type="protein sequence ID" value="AHN59364.1"/>
    <property type="molecule type" value="Genomic_DNA"/>
</dbReference>
<dbReference type="EMBL" id="AY095526">
    <property type="protein sequence ID" value="AAM12257.1"/>
    <property type="molecule type" value="mRNA"/>
</dbReference>
<dbReference type="RefSeq" id="NP_001284892.1">
    <property type="nucleotide sequence ID" value="NM_001297963.1"/>
</dbReference>
<dbReference type="RefSeq" id="NP_001284893.1">
    <property type="nucleotide sequence ID" value="NM_001297964.1"/>
</dbReference>
<dbReference type="RefSeq" id="NP_572225.1">
    <property type="nucleotide sequence ID" value="NM_131997.2"/>
</dbReference>
<dbReference type="SMR" id="Q8SWR3"/>
<dbReference type="FunCoup" id="Q8SWR3">
    <property type="interactions" value="46"/>
</dbReference>
<dbReference type="STRING" id="7227.FBpp0308828"/>
<dbReference type="PaxDb" id="7227-FBpp0070744"/>
<dbReference type="DNASU" id="31463"/>
<dbReference type="EnsemblMetazoa" id="FBtr0070778">
    <property type="protein sequence ID" value="FBpp0070744"/>
    <property type="gene ID" value="FBgn0029768"/>
</dbReference>
<dbReference type="EnsemblMetazoa" id="FBtr0339781">
    <property type="protein sequence ID" value="FBpp0308828"/>
    <property type="gene ID" value="FBgn0029768"/>
</dbReference>
<dbReference type="EnsemblMetazoa" id="FBtr0344824">
    <property type="protein sequence ID" value="FBpp0311140"/>
    <property type="gene ID" value="FBgn0029768"/>
</dbReference>
<dbReference type="GeneID" id="31463"/>
<dbReference type="KEGG" id="dme:Dmel_CG16752"/>
<dbReference type="UCSC" id="CG16752-RA">
    <property type="organism name" value="d. melanogaster"/>
</dbReference>
<dbReference type="AGR" id="FB:FBgn0029768"/>
<dbReference type="CTD" id="6697"/>
<dbReference type="FlyBase" id="FBgn0029768">
    <property type="gene designation" value="SPR"/>
</dbReference>
<dbReference type="VEuPathDB" id="VectorBase:FBgn0029768"/>
<dbReference type="eggNOG" id="ENOG502QVMK">
    <property type="taxonomic scope" value="Eukaryota"/>
</dbReference>
<dbReference type="GeneTree" id="ENSGT00730000112478"/>
<dbReference type="HOGENOM" id="CLU_009579_24_5_1"/>
<dbReference type="InParanoid" id="Q8SWR3"/>
<dbReference type="OMA" id="HLETAMW"/>
<dbReference type="OrthoDB" id="5962323at2759"/>
<dbReference type="PhylomeDB" id="Q8SWR3"/>
<dbReference type="BioGRID-ORCS" id="31463">
    <property type="hits" value="0 hits in 1 CRISPR screen"/>
</dbReference>
<dbReference type="GenomeRNAi" id="31463"/>
<dbReference type="PRO" id="PR:Q8SWR3"/>
<dbReference type="Proteomes" id="UP000000803">
    <property type="component" value="Chromosome X"/>
</dbReference>
<dbReference type="Bgee" id="FBgn0029768">
    <property type="expression patterns" value="Expressed in distal medullary amacrine neuron Dm9 in insect head and 141 other cell types or tissues"/>
</dbReference>
<dbReference type="ExpressionAtlas" id="Q8SWR3">
    <property type="expression patterns" value="baseline and differential"/>
</dbReference>
<dbReference type="GO" id="GO:0005886">
    <property type="term" value="C:plasma membrane"/>
    <property type="evidence" value="ECO:0000314"/>
    <property type="project" value="FlyBase"/>
</dbReference>
<dbReference type="GO" id="GO:0008528">
    <property type="term" value="F:G protein-coupled peptide receptor activity"/>
    <property type="evidence" value="ECO:0000353"/>
    <property type="project" value="FlyBase"/>
</dbReference>
<dbReference type="GO" id="GO:0007186">
    <property type="term" value="P:G protein-coupled receptor signaling pathway"/>
    <property type="evidence" value="ECO:0000314"/>
    <property type="project" value="FlyBase"/>
</dbReference>
<dbReference type="GO" id="GO:0045434">
    <property type="term" value="P:negative regulation of female receptivity, post-mating"/>
    <property type="evidence" value="ECO:0000315"/>
    <property type="project" value="FlyBase"/>
</dbReference>
<dbReference type="GO" id="GO:0046662">
    <property type="term" value="P:regulation of egg-laying behavior"/>
    <property type="evidence" value="ECO:0000315"/>
    <property type="project" value="FlyBase"/>
</dbReference>
<dbReference type="CDD" id="cd14978">
    <property type="entry name" value="7tmA_FMRFamide_R-like"/>
    <property type="match status" value="1"/>
</dbReference>
<dbReference type="FunFam" id="1.20.1070.10:FF:000563">
    <property type="entry name" value="Sex peptide receptor"/>
    <property type="match status" value="1"/>
</dbReference>
<dbReference type="Gene3D" id="1.20.1070.10">
    <property type="entry name" value="Rhodopsin 7-helix transmembrane proteins"/>
    <property type="match status" value="1"/>
</dbReference>
<dbReference type="InterPro" id="IPR019427">
    <property type="entry name" value="7TM_GPCR_serpentine_rcpt_Srw"/>
</dbReference>
<dbReference type="InterPro" id="IPR053071">
    <property type="entry name" value="GPCR1-related_rcpt"/>
</dbReference>
<dbReference type="InterPro" id="IPR000276">
    <property type="entry name" value="GPCR_Rhodpsn"/>
</dbReference>
<dbReference type="InterPro" id="IPR017452">
    <property type="entry name" value="GPCR_Rhodpsn_7TM"/>
</dbReference>
<dbReference type="PANTHER" id="PTHR47023">
    <property type="entry name" value="SEX PEPTIDE RECEPTOR"/>
    <property type="match status" value="1"/>
</dbReference>
<dbReference type="PANTHER" id="PTHR47023:SF1">
    <property type="entry name" value="SEX PEPTIDE RECEPTOR"/>
    <property type="match status" value="1"/>
</dbReference>
<dbReference type="Pfam" id="PF10324">
    <property type="entry name" value="7TM_GPCR_Srw"/>
    <property type="match status" value="1"/>
</dbReference>
<dbReference type="PRINTS" id="PR00237">
    <property type="entry name" value="GPCRRHODOPSN"/>
</dbReference>
<dbReference type="SUPFAM" id="SSF81321">
    <property type="entry name" value="Family A G protein-coupled receptor-like"/>
    <property type="match status" value="1"/>
</dbReference>
<dbReference type="PROSITE" id="PS50262">
    <property type="entry name" value="G_PROTEIN_RECEP_F1_2"/>
    <property type="match status" value="1"/>
</dbReference>
<evidence type="ECO:0000255" key="1"/>
<evidence type="ECO:0000255" key="2">
    <source>
        <dbReference type="PROSITE-ProRule" id="PRU00521"/>
    </source>
</evidence>
<evidence type="ECO:0000269" key="3">
    <source>
    </source>
</evidence>
<evidence type="ECO:0000269" key="4">
    <source>
    </source>
</evidence>
<evidence type="ECO:0000269" key="5">
    <source>
    </source>
</evidence>
<evidence type="ECO:0000269" key="6">
    <source>
    </source>
</evidence>
<evidence type="ECO:0000305" key="7"/>
<evidence type="ECO:0000312" key="8">
    <source>
        <dbReference type="EMBL" id="AAM12257.1"/>
    </source>
</evidence>
<evidence type="ECO:0000312" key="9">
    <source>
        <dbReference type="EMBL" id="ACC68840.1"/>
    </source>
</evidence>
<evidence type="ECO:0000312" key="10">
    <source>
        <dbReference type="FlyBase" id="FBgn0029768"/>
    </source>
</evidence>
<evidence type="ECO:0000312" key="11">
    <source>
        <dbReference type="Proteomes" id="UP000000803"/>
    </source>
</evidence>
<accession>Q8SWR3</accession>
<accession>Q9W4B9</accession>
<proteinExistence type="evidence at protein level"/>
<keyword id="KW-1003">Cell membrane</keyword>
<keyword id="KW-0297">G-protein coupled receptor</keyword>
<keyword id="KW-0472">Membrane</keyword>
<keyword id="KW-0675">Receptor</keyword>
<keyword id="KW-1185">Reference proteome</keyword>
<keyword id="KW-0807">Transducer</keyword>
<keyword id="KW-0812">Transmembrane</keyword>
<keyword id="KW-1133">Transmembrane helix</keyword>